<proteinExistence type="evidence at protein level"/>
<comment type="function">
    <text evidence="2 3">Regulatory subunit of the condensin complex, a complex required for conversion of interphase chromatin into mitotic-like condense chromosomes. The condensin complex probably introduces positive supercoils into relaxed DNA in the presence of type I topoisomerases and converts nicked DNA into positive knotted forms in the presence of type II topoisomerases. The condensin complex probably also plays a role during interphase.</text>
</comment>
<comment type="subunit">
    <text evidence="4">Component of the condensin complex, which contains the SMC2 and SMC4 heterodimer, and three non SMC subunits that probably regulate the complex: BRN1, YCS4 and YCG1/YCS5.</text>
</comment>
<comment type="interaction">
    <interactant intactId="EBI-4792">
        <id>P38170</id>
    </interactant>
    <interactant intactId="EBI-17412">
        <id>P38989</id>
        <label>SMC2</label>
    </interactant>
    <organismsDiffer>false</organismsDiffer>
    <experiments>3</experiments>
</comment>
<comment type="interaction">
    <interactant intactId="EBI-4792">
        <id>P38170</id>
    </interactant>
    <interactant intactId="EBI-17430">
        <id>Q12267</id>
        <label>SMC4</label>
    </interactant>
    <organismsDiffer>false</organismsDiffer>
    <experiments>2</experiments>
</comment>
<comment type="subcellular location">
    <subcellularLocation>
        <location evidence="3">Nucleus</location>
    </subcellularLocation>
    <subcellularLocation>
        <location evidence="3">Cytoplasm</location>
    </subcellularLocation>
    <subcellularLocation>
        <location evidence="3">Chromosome</location>
    </subcellularLocation>
    <text>In interphase cells, the majority of the condensin complex is found in the cytoplasm, while a minority of the complex is associated with chromatin. A subpopulation of the complex however remains associated with chromosome foci in interphase cells. During mitosis, most of the condensin complex is associated with the chromatin. At the onset of prophase, condensin associates with chromosome arms and to chromosome condensation. Dissociation from chromosomes is observed in late telophase.</text>
</comment>
<comment type="miscellaneous">
    <text evidence="5">Present with 704 molecules/cell in log phase SD medium.</text>
</comment>
<comment type="similarity">
    <text evidence="6">Belongs to the CND2 (condensin subunit 2) family.</text>
</comment>
<comment type="sequence caution" evidence="6">
    <conflict type="frameshift">
        <sequence resource="EMBL-CDS" id="CAA56003"/>
    </conflict>
</comment>
<comment type="sequence caution" evidence="6">
    <conflict type="frameshift">
        <sequence resource="EMBL-CDS" id="CAA84919"/>
    </conflict>
</comment>
<evidence type="ECO:0000256" key="1">
    <source>
        <dbReference type="SAM" id="MobiDB-lite"/>
    </source>
</evidence>
<evidence type="ECO:0000269" key="2">
    <source>
    </source>
</evidence>
<evidence type="ECO:0000269" key="3">
    <source>
    </source>
</evidence>
<evidence type="ECO:0000269" key="4">
    <source>
    </source>
</evidence>
<evidence type="ECO:0000269" key="5">
    <source>
    </source>
</evidence>
<evidence type="ECO:0000305" key="6"/>
<evidence type="ECO:0007744" key="7">
    <source>
    </source>
</evidence>
<evidence type="ECO:0007829" key="8">
    <source>
        <dbReference type="PDB" id="5OQO"/>
    </source>
</evidence>
<evidence type="ECO:0007829" key="9">
    <source>
        <dbReference type="PDB" id="5OQP"/>
    </source>
</evidence>
<evidence type="ECO:0007829" key="10">
    <source>
        <dbReference type="PDB" id="5OQQ"/>
    </source>
</evidence>
<evidence type="ECO:0007829" key="11">
    <source>
        <dbReference type="PDB" id="7Q2X"/>
    </source>
</evidence>
<evidence type="ECO:0007829" key="12">
    <source>
        <dbReference type="PDB" id="7QEN"/>
    </source>
</evidence>
<dbReference type="EMBL" id="X79489">
    <property type="protein sequence ID" value="CAA56003.1"/>
    <property type="status" value="ALT_FRAME"/>
    <property type="molecule type" value="Genomic_DNA"/>
</dbReference>
<dbReference type="EMBL" id="Z35858">
    <property type="protein sequence ID" value="CAA84919.1"/>
    <property type="status" value="ALT_FRAME"/>
    <property type="molecule type" value="Genomic_DNA"/>
</dbReference>
<dbReference type="EMBL" id="AY558077">
    <property type="protein sequence ID" value="AAS56403.1"/>
    <property type="molecule type" value="Genomic_DNA"/>
</dbReference>
<dbReference type="EMBL" id="BK006936">
    <property type="protein sequence ID" value="DAA07028.2"/>
    <property type="molecule type" value="Genomic_DNA"/>
</dbReference>
<dbReference type="PIR" id="S45403">
    <property type="entry name" value="S45403"/>
</dbReference>
<dbReference type="RefSeq" id="NP_009455.3">
    <property type="nucleotide sequence ID" value="NM_001178337.2"/>
</dbReference>
<dbReference type="PDB" id="5OQN">
    <property type="method" value="X-ray"/>
    <property type="resolution" value="3.15 A"/>
    <property type="chains" value="B=384-529"/>
</dbReference>
<dbReference type="PDB" id="5OQO">
    <property type="method" value="X-ray"/>
    <property type="resolution" value="3.25 A"/>
    <property type="chains" value="B=384-529"/>
</dbReference>
<dbReference type="PDB" id="5OQP">
    <property type="method" value="X-ray"/>
    <property type="resolution" value="2.98 A"/>
    <property type="chains" value="B=384-529"/>
</dbReference>
<dbReference type="PDB" id="5OQQ">
    <property type="method" value="X-ray"/>
    <property type="resolution" value="2.79 A"/>
    <property type="chains" value="C/D=384-529"/>
</dbReference>
<dbReference type="PDB" id="6YVD">
    <property type="method" value="EM"/>
    <property type="resolution" value="7.60 A"/>
    <property type="chains" value="B=1-754"/>
</dbReference>
<dbReference type="PDB" id="6YVU">
    <property type="method" value="EM"/>
    <property type="resolution" value="7.50 A"/>
    <property type="chains" value="C=1-754"/>
</dbReference>
<dbReference type="PDB" id="6YVV">
    <property type="method" value="EM"/>
    <property type="resolution" value="7.50 A"/>
    <property type="chains" value="C=1-754"/>
</dbReference>
<dbReference type="PDB" id="7Q2X">
    <property type="method" value="EM"/>
    <property type="resolution" value="3.00 A"/>
    <property type="chains" value="C=1-754"/>
</dbReference>
<dbReference type="PDB" id="7Q2Y">
    <property type="method" value="EM"/>
    <property type="chains" value="C=1-754"/>
</dbReference>
<dbReference type="PDB" id="7Q2Z">
    <property type="method" value="EM"/>
    <property type="resolution" value="3.20 A"/>
    <property type="chains" value="C=1-754"/>
</dbReference>
<dbReference type="PDB" id="7QEN">
    <property type="method" value="EM"/>
    <property type="resolution" value="3.46 A"/>
    <property type="chains" value="C=1-754"/>
</dbReference>
<dbReference type="PDB" id="7QFW">
    <property type="method" value="EM"/>
    <property type="resolution" value="3.86 A"/>
    <property type="chains" value="B=1-754"/>
</dbReference>
<dbReference type="PDBsum" id="5OQN"/>
<dbReference type="PDBsum" id="5OQO"/>
<dbReference type="PDBsum" id="5OQP"/>
<dbReference type="PDBsum" id="5OQQ"/>
<dbReference type="PDBsum" id="6YVD"/>
<dbReference type="PDBsum" id="6YVU"/>
<dbReference type="PDBsum" id="6YVV"/>
<dbReference type="PDBsum" id="7Q2X"/>
<dbReference type="PDBsum" id="7Q2Y"/>
<dbReference type="PDBsum" id="7Q2Z"/>
<dbReference type="PDBsum" id="7QEN"/>
<dbReference type="PDBsum" id="7QFW"/>
<dbReference type="EMDB" id="EMD-10944"/>
<dbReference type="EMDB" id="EMD-10951"/>
<dbReference type="EMDB" id="EMD-10952"/>
<dbReference type="EMDB" id="EMD-13783"/>
<dbReference type="EMDB" id="EMD-13784"/>
<dbReference type="EMDB" id="EMD-13786"/>
<dbReference type="EMDB" id="EMD-13934"/>
<dbReference type="EMDB" id="EMD-13950"/>
<dbReference type="SMR" id="P38170"/>
<dbReference type="BioGRID" id="32608">
    <property type="interactions" value="451"/>
</dbReference>
<dbReference type="ComplexPortal" id="CPX-1869">
    <property type="entry name" value="Nuclear condensin complex"/>
</dbReference>
<dbReference type="DIP" id="DIP-4662N"/>
<dbReference type="FunCoup" id="P38170">
    <property type="interactions" value="1044"/>
</dbReference>
<dbReference type="IntAct" id="P38170">
    <property type="interactions" value="11"/>
</dbReference>
<dbReference type="MINT" id="P38170"/>
<dbReference type="STRING" id="4932.YBL097W"/>
<dbReference type="CarbonylDB" id="P38170"/>
<dbReference type="iPTMnet" id="P38170"/>
<dbReference type="PaxDb" id="4932-YBL097W"/>
<dbReference type="PeptideAtlas" id="P38170"/>
<dbReference type="EnsemblFungi" id="YBL097W_mRNA">
    <property type="protein sequence ID" value="YBL097W"/>
    <property type="gene ID" value="YBL097W"/>
</dbReference>
<dbReference type="GeneID" id="852180"/>
<dbReference type="KEGG" id="sce:YBL097W"/>
<dbReference type="AGR" id="SGD:S000000193"/>
<dbReference type="SGD" id="S000000193">
    <property type="gene designation" value="BRN1"/>
</dbReference>
<dbReference type="VEuPathDB" id="FungiDB:YBL097W"/>
<dbReference type="eggNOG" id="KOG2328">
    <property type="taxonomic scope" value="Eukaryota"/>
</dbReference>
<dbReference type="GeneTree" id="ENSGT00390000004149"/>
<dbReference type="HOGENOM" id="CLU_010510_0_1_1"/>
<dbReference type="InParanoid" id="P38170"/>
<dbReference type="OMA" id="GREHWKV"/>
<dbReference type="OrthoDB" id="362021at2759"/>
<dbReference type="BioCyc" id="YEAST:G3O-28983-MONOMER"/>
<dbReference type="Reactome" id="R-SCE-2514853">
    <property type="pathway name" value="Condensation of Prometaphase Chromosomes"/>
</dbReference>
<dbReference type="BioGRID-ORCS" id="852180">
    <property type="hits" value="9 hits in 10 CRISPR screens"/>
</dbReference>
<dbReference type="PRO" id="PR:P38170"/>
<dbReference type="Proteomes" id="UP000002311">
    <property type="component" value="Chromosome II"/>
</dbReference>
<dbReference type="RNAct" id="P38170">
    <property type="molecule type" value="protein"/>
</dbReference>
<dbReference type="GO" id="GO:0000796">
    <property type="term" value="C:condensin complex"/>
    <property type="evidence" value="ECO:0000314"/>
    <property type="project" value="SGD"/>
</dbReference>
<dbReference type="GO" id="GO:0005737">
    <property type="term" value="C:cytoplasm"/>
    <property type="evidence" value="ECO:0007669"/>
    <property type="project" value="UniProtKB-SubCell"/>
</dbReference>
<dbReference type="GO" id="GO:0005634">
    <property type="term" value="C:nucleus"/>
    <property type="evidence" value="ECO:0000314"/>
    <property type="project" value="SGD"/>
</dbReference>
<dbReference type="GO" id="GO:0003682">
    <property type="term" value="F:chromatin binding"/>
    <property type="evidence" value="ECO:0000316"/>
    <property type="project" value="SGD"/>
</dbReference>
<dbReference type="GO" id="GO:0051301">
    <property type="term" value="P:cell division"/>
    <property type="evidence" value="ECO:0007669"/>
    <property type="project" value="UniProtKB-KW"/>
</dbReference>
<dbReference type="GO" id="GO:0030261">
    <property type="term" value="P:chromosome condensation"/>
    <property type="evidence" value="ECO:0000303"/>
    <property type="project" value="ComplexPortal"/>
</dbReference>
<dbReference type="GO" id="GO:0007076">
    <property type="term" value="P:mitotic chromosome condensation"/>
    <property type="evidence" value="ECO:0000315"/>
    <property type="project" value="SGD"/>
</dbReference>
<dbReference type="GO" id="GO:0000070">
    <property type="term" value="P:mitotic sister chromatid segregation"/>
    <property type="evidence" value="ECO:0000315"/>
    <property type="project" value="SGD"/>
</dbReference>
<dbReference type="GO" id="GO:0070058">
    <property type="term" value="P:tRNA gene clustering"/>
    <property type="evidence" value="ECO:0000315"/>
    <property type="project" value="SGD"/>
</dbReference>
<dbReference type="InterPro" id="IPR022816">
    <property type="entry name" value="Condensin_barren_su2"/>
</dbReference>
<dbReference type="PANTHER" id="PTHR13108">
    <property type="entry name" value="CONDENSIN COMPLEX SUBUNIT 2"/>
    <property type="match status" value="1"/>
</dbReference>
<dbReference type="PANTHER" id="PTHR13108:SF9">
    <property type="entry name" value="CONDENSIN COMPLEX SUBUNIT 2"/>
    <property type="match status" value="1"/>
</dbReference>
<dbReference type="Pfam" id="PF05786">
    <property type="entry name" value="Cnd2"/>
    <property type="match status" value="1"/>
</dbReference>
<dbReference type="PIRSF" id="PIRSF017126">
    <property type="entry name" value="Condensin_H"/>
    <property type="match status" value="1"/>
</dbReference>
<organism>
    <name type="scientific">Saccharomyces cerevisiae (strain ATCC 204508 / S288c)</name>
    <name type="common">Baker's yeast</name>
    <dbReference type="NCBI Taxonomy" id="559292"/>
    <lineage>
        <taxon>Eukaryota</taxon>
        <taxon>Fungi</taxon>
        <taxon>Dikarya</taxon>
        <taxon>Ascomycota</taxon>
        <taxon>Saccharomycotina</taxon>
        <taxon>Saccharomycetes</taxon>
        <taxon>Saccharomycetales</taxon>
        <taxon>Saccharomycetaceae</taxon>
        <taxon>Saccharomyces</taxon>
    </lineage>
</organism>
<sequence>MTTQLRYENNDDDERVEYNLFTNRSTMMANFEEWIKMATDNKINSRNSWNFALIDYFYDLDVLKDGENNINFQKASATLDGCIKIYSSRVDSVTTETGKLLSGLAQRKTNGASNGDDSNGGNGEGLGGDSDEANIEIDPLTGMPISNDPDVNNTRRRVYNRVLETTLVEFETIKMKELDQELIIDPLFKKALVDFDEGGAKSLLLNTLNIDNTARVIFDASIKDTQNVGQGKLQRKEEELIERDSLVDDENEPSQSLISTRNDSTVNDSVISAPSMEDEILSLGMDFIKFDQIAVCEISGSIEQLRNVVEDINQAKDFIENVNNRFDNFLTEEELQAAVPDNAEDDSDGFDMGMQQELCYPDENHDNTSHDEQDDDNVNSTTGSIFEKDLMAYFDENLNRNWRGREHWKVRNFKKANLVNKESDLLEETRTTIGDTTDKNTTDDKSMDTKKKHKQKKVLEIDFFKTDDSFEDKVFASKGRTKIDMPIKNRKNDTHYLLPDDFHFSTDRITRLFIKPGQKMSLFSHRKHTRGDVSSGLFEKSTVSANHSNNDIPTIADEHFWADNYERKEQEEKEKEQSKEVGDVVGGALDNPFEDDMDGVDFNQAFEGTDDNEEASVKLDLQDDEDHKFPIRENKVTYSRVSKKVDVRRLKKNVWRSINNLIQEHDSRKNREQSSNDSETHTEDESTKELKFSDIIQGISKMYSDDTLKDISTSFCFICLLHLANEHGLQITHTENYNDLIVNYEDLATTQAAS</sequence>
<name>CND2_YEAST</name>
<protein>
    <recommendedName>
        <fullName>Condensin complex subunit 2</fullName>
    </recommendedName>
    <alternativeName>
        <fullName>Barren homolog</fullName>
    </alternativeName>
    <alternativeName>
        <fullName>CAPH homolog</fullName>
    </alternativeName>
</protein>
<reference key="1">
    <citation type="journal article" date="1995" name="Yeast">
        <title>Sequence analysis of a 78.6 kb segment of the left end of Saccharomyces cerevisiae chromosome II.</title>
        <authorList>
            <person name="Obermaier B."/>
            <person name="Gassenhuber J."/>
            <person name="Piravandi E."/>
            <person name="Domdey H."/>
        </authorList>
    </citation>
    <scope>NUCLEOTIDE SEQUENCE [GENOMIC DNA]</scope>
    <source>
        <strain>S288c / FY1678</strain>
    </source>
</reference>
<reference key="2">
    <citation type="journal article" date="1994" name="EMBO J.">
        <title>Complete DNA sequence of yeast chromosome II.</title>
        <authorList>
            <person name="Feldmann H."/>
            <person name="Aigle M."/>
            <person name="Aljinovic G."/>
            <person name="Andre B."/>
            <person name="Baclet M.C."/>
            <person name="Barthe C."/>
            <person name="Baur A."/>
            <person name="Becam A.-M."/>
            <person name="Biteau N."/>
            <person name="Boles E."/>
            <person name="Brandt T."/>
            <person name="Brendel M."/>
            <person name="Brueckner M."/>
            <person name="Bussereau F."/>
            <person name="Christiansen C."/>
            <person name="Contreras R."/>
            <person name="Crouzet M."/>
            <person name="Cziepluch C."/>
            <person name="Demolis N."/>
            <person name="Delaveau T."/>
            <person name="Doignon F."/>
            <person name="Domdey H."/>
            <person name="Duesterhus S."/>
            <person name="Dubois E."/>
            <person name="Dujon B."/>
            <person name="El Bakkoury M."/>
            <person name="Entian K.-D."/>
            <person name="Feuermann M."/>
            <person name="Fiers W."/>
            <person name="Fobo G.M."/>
            <person name="Fritz C."/>
            <person name="Gassenhuber J."/>
            <person name="Glansdorff N."/>
            <person name="Goffeau A."/>
            <person name="Grivell L.A."/>
            <person name="de Haan M."/>
            <person name="Hein C."/>
            <person name="Herbert C.J."/>
            <person name="Hollenberg C.P."/>
            <person name="Holmstroem K."/>
            <person name="Jacq C."/>
            <person name="Jacquet M."/>
            <person name="Jauniaux J.-C."/>
            <person name="Jonniaux J.-L."/>
            <person name="Kallesoee T."/>
            <person name="Kiesau P."/>
            <person name="Kirchrath L."/>
            <person name="Koetter P."/>
            <person name="Korol S."/>
            <person name="Liebl S."/>
            <person name="Logghe M."/>
            <person name="Lohan A.J.E."/>
            <person name="Louis E.J."/>
            <person name="Li Z.Y."/>
            <person name="Maat M.J."/>
            <person name="Mallet L."/>
            <person name="Mannhaupt G."/>
            <person name="Messenguy F."/>
            <person name="Miosga T."/>
            <person name="Molemans F."/>
            <person name="Mueller S."/>
            <person name="Nasr F."/>
            <person name="Obermaier B."/>
            <person name="Perea J."/>
            <person name="Pierard A."/>
            <person name="Piravandi E."/>
            <person name="Pohl F.M."/>
            <person name="Pohl T.M."/>
            <person name="Potier S."/>
            <person name="Proft M."/>
            <person name="Purnelle B."/>
            <person name="Ramezani Rad M."/>
            <person name="Rieger M."/>
            <person name="Rose M."/>
            <person name="Schaaff-Gerstenschlaeger I."/>
            <person name="Scherens B."/>
            <person name="Schwarzlose C."/>
            <person name="Skala J."/>
            <person name="Slonimski P.P."/>
            <person name="Smits P.H.M."/>
            <person name="Souciet J.-L."/>
            <person name="Steensma H.Y."/>
            <person name="Stucka R."/>
            <person name="Urrestarazu L.A."/>
            <person name="van der Aart Q.J.M."/>
            <person name="Van Dyck L."/>
            <person name="Vassarotti A."/>
            <person name="Vetter I."/>
            <person name="Vierendeels F."/>
            <person name="Vissers S."/>
            <person name="Wagner G."/>
            <person name="de Wergifosse P."/>
            <person name="Wolfe K.H."/>
            <person name="Zagulski M."/>
            <person name="Zimmermann F.K."/>
            <person name="Mewes H.-W."/>
            <person name="Kleine K."/>
        </authorList>
    </citation>
    <scope>NUCLEOTIDE SEQUENCE [LARGE SCALE GENOMIC DNA]</scope>
    <source>
        <strain>ATCC 204508 / S288c</strain>
    </source>
</reference>
<reference key="3">
    <citation type="journal article" date="2014" name="G3 (Bethesda)">
        <title>The reference genome sequence of Saccharomyces cerevisiae: Then and now.</title>
        <authorList>
            <person name="Engel S.R."/>
            <person name="Dietrich F.S."/>
            <person name="Fisk D.G."/>
            <person name="Binkley G."/>
            <person name="Balakrishnan R."/>
            <person name="Costanzo M.C."/>
            <person name="Dwight S.S."/>
            <person name="Hitz B.C."/>
            <person name="Karra K."/>
            <person name="Nash R.S."/>
            <person name="Weng S."/>
            <person name="Wong E.D."/>
            <person name="Lloyd P."/>
            <person name="Skrzypek M.S."/>
            <person name="Miyasato S.R."/>
            <person name="Simison M."/>
            <person name="Cherry J.M."/>
        </authorList>
    </citation>
    <scope>GENOME REANNOTATION</scope>
    <scope>SEQUENCE REVISION TO 517</scope>
    <source>
        <strain>ATCC 204508 / S288c</strain>
    </source>
</reference>
<reference key="4">
    <citation type="journal article" date="2007" name="Genome Res.">
        <title>Approaching a complete repository of sequence-verified protein-encoding clones for Saccharomyces cerevisiae.</title>
        <authorList>
            <person name="Hu Y."/>
            <person name="Rolfs A."/>
            <person name="Bhullar B."/>
            <person name="Murthy T.V.S."/>
            <person name="Zhu C."/>
            <person name="Berger M.F."/>
            <person name="Camargo A.A."/>
            <person name="Kelley F."/>
            <person name="McCarron S."/>
            <person name="Jepson D."/>
            <person name="Richardson A."/>
            <person name="Raphael J."/>
            <person name="Moreira D."/>
            <person name="Taycher E."/>
            <person name="Zuo D."/>
            <person name="Mohr S."/>
            <person name="Kane M.F."/>
            <person name="Williamson J."/>
            <person name="Simpson A.J.G."/>
            <person name="Bulyk M.L."/>
            <person name="Harlow E."/>
            <person name="Marsischky G."/>
            <person name="Kolodner R.D."/>
            <person name="LaBaer J."/>
        </authorList>
    </citation>
    <scope>NUCLEOTIDE SEQUENCE [GENOMIC DNA] OF 27-754</scope>
    <source>
        <strain>ATCC 204508 / S288c</strain>
    </source>
</reference>
<reference key="5">
    <citation type="journal article" date="2000" name="J. Cell Biol.">
        <title>The condensin complex governs chromosome condensation and mitotic transmission of rDNA.</title>
        <authorList>
            <person name="Freeman L."/>
            <person name="Aragon-Alcaide L."/>
            <person name="Strunnikov A.V."/>
        </authorList>
    </citation>
    <scope>IDENTIFICATION IN A CONDENSIN COMPLEX WITH SMC2; SMC4; YCG1 AND YCS4</scope>
</reference>
<reference key="6">
    <citation type="journal article" date="2000" name="Mol. Biol. Cell">
        <title>Mitotic chromosome condensation requires Brn1p, the yeast homologue of Barren.</title>
        <authorList>
            <person name="Lavoie B.D."/>
            <person name="Tuffo K.M."/>
            <person name="Oh S."/>
            <person name="Koshland D."/>
            <person name="Holm C."/>
        </authorList>
    </citation>
    <scope>FUNCTION</scope>
</reference>
<reference key="7">
    <citation type="journal article" date="2000" name="Mol. Biol. Cell">
        <title>Chromosome condensation factor Brn1p is required for chromatid separation in mitosis.</title>
        <authorList>
            <person name="Ouspenski I.I."/>
            <person name="Cabello O.A."/>
            <person name="Brinkley B.R."/>
        </authorList>
    </citation>
    <scope>FUNCTION</scope>
    <scope>SUBCELLULAR LOCATION</scope>
    <scope>INTERACTION WITH SMC2</scope>
</reference>
<reference key="8">
    <citation type="journal article" date="2003" name="Nature">
        <title>Sequencing and comparison of yeast species to identify genes and regulatory elements.</title>
        <authorList>
            <person name="Kellis M."/>
            <person name="Patterson N."/>
            <person name="Endrizzi M."/>
            <person name="Birren B.W."/>
            <person name="Lander E.S."/>
        </authorList>
    </citation>
    <scope>IDENTIFICATION OF FRAMESHIFT</scope>
</reference>
<reference key="9">
    <citation type="journal article" date="2003" name="Nature">
        <title>Global analysis of protein expression in yeast.</title>
        <authorList>
            <person name="Ghaemmaghami S."/>
            <person name="Huh W.-K."/>
            <person name="Bower K."/>
            <person name="Howson R.W."/>
            <person name="Belle A."/>
            <person name="Dephoure N."/>
            <person name="O'Shea E.K."/>
            <person name="Weissman J.S."/>
        </authorList>
    </citation>
    <scope>LEVEL OF PROTEIN EXPRESSION [LARGE SCALE ANALYSIS]</scope>
</reference>
<reference key="10">
    <citation type="journal article" date="2008" name="Mol. Cell. Proteomics">
        <title>A multidimensional chromatography technology for in-depth phosphoproteome analysis.</title>
        <authorList>
            <person name="Albuquerque C.P."/>
            <person name="Smolka M.B."/>
            <person name="Payne S.H."/>
            <person name="Bafna V."/>
            <person name="Eng J."/>
            <person name="Zhou H."/>
        </authorList>
    </citation>
    <scope>IDENTIFICATION BY MASS SPECTROMETRY [LARGE SCALE ANALYSIS]</scope>
</reference>
<reference key="11">
    <citation type="journal article" date="2009" name="Science">
        <title>Global analysis of Cdk1 substrate phosphorylation sites provides insights into evolution.</title>
        <authorList>
            <person name="Holt L.J."/>
            <person name="Tuch B.B."/>
            <person name="Villen J."/>
            <person name="Johnson A.D."/>
            <person name="Gygi S.P."/>
            <person name="Morgan D.O."/>
        </authorList>
    </citation>
    <scope>PHOSPHORYLATION [LARGE SCALE ANALYSIS] AT SER-245 AND SER-548</scope>
    <scope>IDENTIFICATION BY MASS SPECTROMETRY [LARGE SCALE ANALYSIS]</scope>
</reference>
<feature type="chain" id="PRO_0000095047" description="Condensin complex subunit 2">
    <location>
        <begin position="1"/>
        <end position="754"/>
    </location>
</feature>
<feature type="region of interest" description="Disordered" evidence="1">
    <location>
        <begin position="104"/>
        <end position="149"/>
    </location>
</feature>
<feature type="region of interest" description="Disordered" evidence="1">
    <location>
        <begin position="359"/>
        <end position="379"/>
    </location>
</feature>
<feature type="region of interest" description="Disordered" evidence="1">
    <location>
        <begin position="665"/>
        <end position="688"/>
    </location>
</feature>
<feature type="compositionally biased region" description="Gly residues" evidence="1">
    <location>
        <begin position="118"/>
        <end position="128"/>
    </location>
</feature>
<feature type="compositionally biased region" description="Basic and acidic residues" evidence="1">
    <location>
        <begin position="362"/>
        <end position="371"/>
    </location>
</feature>
<feature type="modified residue" description="Phosphoserine" evidence="7">
    <location>
        <position position="245"/>
    </location>
</feature>
<feature type="modified residue" description="Phosphoserine" evidence="7">
    <location>
        <position position="548"/>
    </location>
</feature>
<feature type="sequence conflict" description="In Ref. 1; CAA56003 and 2; CAA84919." evidence="6" ref="1 2">
    <original>G</original>
    <variation>A</variation>
    <location>
        <position position="517"/>
    </location>
</feature>
<feature type="helix" evidence="11">
    <location>
        <begin position="23"/>
        <end position="39"/>
    </location>
</feature>
<feature type="strand" evidence="11">
    <location>
        <begin position="48"/>
        <end position="50"/>
    </location>
</feature>
<feature type="helix" evidence="11">
    <location>
        <begin position="53"/>
        <end position="58"/>
    </location>
</feature>
<feature type="turn" evidence="11">
    <location>
        <begin position="60"/>
        <end position="63"/>
    </location>
</feature>
<feature type="strand" evidence="12">
    <location>
        <begin position="66"/>
        <end position="70"/>
    </location>
</feature>
<feature type="helix" evidence="11">
    <location>
        <begin position="72"/>
        <end position="103"/>
    </location>
</feature>
<feature type="helix" evidence="11">
    <location>
        <begin position="170"/>
        <end position="173"/>
    </location>
</feature>
<feature type="helix" evidence="11">
    <location>
        <begin position="186"/>
        <end position="197"/>
    </location>
</feature>
<feature type="strand" evidence="11">
    <location>
        <begin position="199"/>
        <end position="201"/>
    </location>
</feature>
<feature type="strand" evidence="11">
    <location>
        <begin position="203"/>
        <end position="208"/>
    </location>
</feature>
<feature type="helix" evidence="11">
    <location>
        <begin position="276"/>
        <end position="287"/>
    </location>
</feature>
<feature type="strand" evidence="11">
    <location>
        <begin position="290"/>
        <end position="293"/>
    </location>
</feature>
<feature type="helix" evidence="11">
    <location>
        <begin position="301"/>
        <end position="310"/>
    </location>
</feature>
<feature type="helix" evidence="11">
    <location>
        <begin position="314"/>
        <end position="322"/>
    </location>
</feature>
<feature type="helix" evidence="10">
    <location>
        <begin position="385"/>
        <end position="398"/>
    </location>
</feature>
<feature type="helix" evidence="9">
    <location>
        <begin position="399"/>
        <end position="401"/>
    </location>
</feature>
<feature type="helix" evidence="8">
    <location>
        <begin position="405"/>
        <end position="408"/>
    </location>
</feature>
<feature type="strand" evidence="9">
    <location>
        <begin position="463"/>
        <end position="465"/>
    </location>
</feature>
<feature type="helix" evidence="10">
    <location>
        <begin position="469"/>
        <end position="474"/>
    </location>
</feature>
<feature type="helix" evidence="10">
    <location>
        <begin position="487"/>
        <end position="490"/>
    </location>
</feature>
<feature type="turn" evidence="10">
    <location>
        <begin position="493"/>
        <end position="496"/>
    </location>
</feature>
<feature type="helix" evidence="10">
    <location>
        <begin position="506"/>
        <end position="510"/>
    </location>
</feature>
<feature type="strand" evidence="9">
    <location>
        <begin position="518"/>
        <end position="520"/>
    </location>
</feature>
<feature type="helix" evidence="11">
    <location>
        <begin position="647"/>
        <end position="668"/>
    </location>
</feature>
<feature type="helix" evidence="11">
    <location>
        <begin position="692"/>
        <end position="700"/>
    </location>
</feature>
<feature type="helix" evidence="11">
    <location>
        <begin position="705"/>
        <end position="710"/>
    </location>
</feature>
<feature type="helix" evidence="11">
    <location>
        <begin position="713"/>
        <end position="726"/>
    </location>
</feature>
<feature type="strand" evidence="11">
    <location>
        <begin position="730"/>
        <end position="733"/>
    </location>
</feature>
<feature type="strand" evidence="12">
    <location>
        <begin position="735"/>
        <end position="738"/>
    </location>
</feature>
<feature type="strand" evidence="11">
    <location>
        <begin position="740"/>
        <end position="743"/>
    </location>
</feature>
<accession>P38170</accession>
<accession>D6VPQ8</accession>
<accession>Q6Q5G8</accession>
<keyword id="KW-0002">3D-structure</keyword>
<keyword id="KW-0131">Cell cycle</keyword>
<keyword id="KW-0132">Cell division</keyword>
<keyword id="KW-0158">Chromosome</keyword>
<keyword id="KW-0963">Cytoplasm</keyword>
<keyword id="KW-0226">DNA condensation</keyword>
<keyword id="KW-0498">Mitosis</keyword>
<keyword id="KW-0539">Nucleus</keyword>
<keyword id="KW-0597">Phosphoprotein</keyword>
<keyword id="KW-1185">Reference proteome</keyword>
<gene>
    <name type="primary">BRN1</name>
    <name type="ordered locus">YBL097W</name>
    <name type="ORF">YBL0830</name>
</gene>